<accession>Q7W9T9</accession>
<reference key="1">
    <citation type="journal article" date="2003" name="Nat. Genet.">
        <title>Comparative analysis of the genome sequences of Bordetella pertussis, Bordetella parapertussis and Bordetella bronchiseptica.</title>
        <authorList>
            <person name="Parkhill J."/>
            <person name="Sebaihia M."/>
            <person name="Preston A."/>
            <person name="Murphy L.D."/>
            <person name="Thomson N.R."/>
            <person name="Harris D.E."/>
            <person name="Holden M.T.G."/>
            <person name="Churcher C.M."/>
            <person name="Bentley S.D."/>
            <person name="Mungall K.L."/>
            <person name="Cerdeno-Tarraga A.-M."/>
            <person name="Temple L."/>
            <person name="James K.D."/>
            <person name="Harris B."/>
            <person name="Quail M.A."/>
            <person name="Achtman M."/>
            <person name="Atkin R."/>
            <person name="Baker S."/>
            <person name="Basham D."/>
            <person name="Bason N."/>
            <person name="Cherevach I."/>
            <person name="Chillingworth T."/>
            <person name="Collins M."/>
            <person name="Cronin A."/>
            <person name="Davis P."/>
            <person name="Doggett J."/>
            <person name="Feltwell T."/>
            <person name="Goble A."/>
            <person name="Hamlin N."/>
            <person name="Hauser H."/>
            <person name="Holroyd S."/>
            <person name="Jagels K."/>
            <person name="Leather S."/>
            <person name="Moule S."/>
            <person name="Norberczak H."/>
            <person name="O'Neil S."/>
            <person name="Ormond D."/>
            <person name="Price C."/>
            <person name="Rabbinowitsch E."/>
            <person name="Rutter S."/>
            <person name="Sanders M."/>
            <person name="Saunders D."/>
            <person name="Seeger K."/>
            <person name="Sharp S."/>
            <person name="Simmonds M."/>
            <person name="Skelton J."/>
            <person name="Squares R."/>
            <person name="Squares S."/>
            <person name="Stevens K."/>
            <person name="Unwin L."/>
            <person name="Whitehead S."/>
            <person name="Barrell B.G."/>
            <person name="Maskell D.J."/>
        </authorList>
    </citation>
    <scope>NUCLEOTIDE SEQUENCE [LARGE SCALE GENOMIC DNA]</scope>
    <source>
        <strain>12822 / ATCC BAA-587 / NCTC 13253</strain>
    </source>
</reference>
<organism>
    <name type="scientific">Bordetella parapertussis (strain 12822 / ATCC BAA-587 / NCTC 13253)</name>
    <dbReference type="NCBI Taxonomy" id="257311"/>
    <lineage>
        <taxon>Bacteria</taxon>
        <taxon>Pseudomonadati</taxon>
        <taxon>Pseudomonadota</taxon>
        <taxon>Betaproteobacteria</taxon>
        <taxon>Burkholderiales</taxon>
        <taxon>Alcaligenaceae</taxon>
        <taxon>Bordetella</taxon>
    </lineage>
</organism>
<protein>
    <recommendedName>
        <fullName evidence="1">Large ribosomal subunit protein bL19</fullName>
    </recommendedName>
    <alternativeName>
        <fullName evidence="2">50S ribosomal protein L19</fullName>
    </alternativeName>
</protein>
<gene>
    <name evidence="1" type="primary">rplS</name>
    <name type="ordered locus">BPP1665</name>
</gene>
<evidence type="ECO:0000255" key="1">
    <source>
        <dbReference type="HAMAP-Rule" id="MF_00402"/>
    </source>
</evidence>
<evidence type="ECO:0000305" key="2"/>
<dbReference type="EMBL" id="BX640428">
    <property type="protein sequence ID" value="CAE36966.1"/>
    <property type="molecule type" value="Genomic_DNA"/>
</dbReference>
<dbReference type="RefSeq" id="WP_003813315.1">
    <property type="nucleotide sequence ID" value="NC_002928.3"/>
</dbReference>
<dbReference type="SMR" id="Q7W9T9"/>
<dbReference type="GeneID" id="93203424"/>
<dbReference type="KEGG" id="bpa:BPP1665"/>
<dbReference type="HOGENOM" id="CLU_103507_1_0_4"/>
<dbReference type="Proteomes" id="UP000001421">
    <property type="component" value="Chromosome"/>
</dbReference>
<dbReference type="GO" id="GO:0022625">
    <property type="term" value="C:cytosolic large ribosomal subunit"/>
    <property type="evidence" value="ECO:0007669"/>
    <property type="project" value="TreeGrafter"/>
</dbReference>
<dbReference type="GO" id="GO:0003735">
    <property type="term" value="F:structural constituent of ribosome"/>
    <property type="evidence" value="ECO:0007669"/>
    <property type="project" value="InterPro"/>
</dbReference>
<dbReference type="GO" id="GO:0006412">
    <property type="term" value="P:translation"/>
    <property type="evidence" value="ECO:0007669"/>
    <property type="project" value="UniProtKB-UniRule"/>
</dbReference>
<dbReference type="FunFam" id="2.30.30.790:FF:000001">
    <property type="entry name" value="50S ribosomal protein L19"/>
    <property type="match status" value="1"/>
</dbReference>
<dbReference type="Gene3D" id="2.30.30.790">
    <property type="match status" value="1"/>
</dbReference>
<dbReference type="HAMAP" id="MF_00402">
    <property type="entry name" value="Ribosomal_bL19"/>
    <property type="match status" value="1"/>
</dbReference>
<dbReference type="InterPro" id="IPR001857">
    <property type="entry name" value="Ribosomal_bL19"/>
</dbReference>
<dbReference type="InterPro" id="IPR018257">
    <property type="entry name" value="Ribosomal_bL19_CS"/>
</dbReference>
<dbReference type="InterPro" id="IPR038657">
    <property type="entry name" value="Ribosomal_bL19_sf"/>
</dbReference>
<dbReference type="InterPro" id="IPR008991">
    <property type="entry name" value="Translation_prot_SH3-like_sf"/>
</dbReference>
<dbReference type="NCBIfam" id="TIGR01024">
    <property type="entry name" value="rplS_bact"/>
    <property type="match status" value="1"/>
</dbReference>
<dbReference type="PANTHER" id="PTHR15680:SF9">
    <property type="entry name" value="LARGE RIBOSOMAL SUBUNIT PROTEIN BL19M"/>
    <property type="match status" value="1"/>
</dbReference>
<dbReference type="PANTHER" id="PTHR15680">
    <property type="entry name" value="RIBOSOMAL PROTEIN L19"/>
    <property type="match status" value="1"/>
</dbReference>
<dbReference type="Pfam" id="PF01245">
    <property type="entry name" value="Ribosomal_L19"/>
    <property type="match status" value="1"/>
</dbReference>
<dbReference type="PIRSF" id="PIRSF002191">
    <property type="entry name" value="Ribosomal_L19"/>
    <property type="match status" value="1"/>
</dbReference>
<dbReference type="PRINTS" id="PR00061">
    <property type="entry name" value="RIBOSOMALL19"/>
</dbReference>
<dbReference type="SUPFAM" id="SSF50104">
    <property type="entry name" value="Translation proteins SH3-like domain"/>
    <property type="match status" value="1"/>
</dbReference>
<dbReference type="PROSITE" id="PS01015">
    <property type="entry name" value="RIBOSOMAL_L19"/>
    <property type="match status" value="1"/>
</dbReference>
<keyword id="KW-0687">Ribonucleoprotein</keyword>
<keyword id="KW-0689">Ribosomal protein</keyword>
<sequence>MNLIAILEQEEIARLTGGNAVTEFAPGDTVVVSVNVVEGTRKRVQAFEGVVIAKRNRGLNSSFIVRKISSGEAVERTFQLYSPQIAGIEVKRRGDVRRAKLYYLRSRSGKSARIKEKLVLKKAKSA</sequence>
<proteinExistence type="inferred from homology"/>
<comment type="function">
    <text evidence="1">This protein is located at the 30S-50S ribosomal subunit interface and may play a role in the structure and function of the aminoacyl-tRNA binding site.</text>
</comment>
<comment type="similarity">
    <text evidence="1">Belongs to the bacterial ribosomal protein bL19 family.</text>
</comment>
<name>RL19_BORPA</name>
<feature type="chain" id="PRO_0000163421" description="Large ribosomal subunit protein bL19">
    <location>
        <begin position="1"/>
        <end position="126"/>
    </location>
</feature>